<sequence length="164" mass="18390">MSNVTFKNDPVTLLGAEKKVGDSAPDFTVLANDLSKKHLSDYKGKVKVISVVPSIDTGVCSEQTRRFNQEATNLENVQILTISMDLPFAQKRWCAANGIDRVDTLSDHREADFGQKYGVIIEELRLLSRAVFVVDENDKITYVEYLSEVSNHPDYEAVLSHLNK</sequence>
<feature type="chain" id="PRO_0000187890" description="Thiol peroxidase">
    <location>
        <begin position="1"/>
        <end position="164"/>
    </location>
</feature>
<feature type="domain" description="Thioredoxin" evidence="1">
    <location>
        <begin position="18"/>
        <end position="164"/>
    </location>
</feature>
<feature type="active site" description="Cysteine sulfenic acid (-SOH) intermediate" evidence="1">
    <location>
        <position position="60"/>
    </location>
</feature>
<feature type="disulfide bond" description="Redox-active" evidence="1">
    <location>
        <begin position="60"/>
        <end position="94"/>
    </location>
</feature>
<proteinExistence type="inferred from homology"/>
<organism>
    <name type="scientific">Oceanobacillus iheyensis (strain DSM 14371 / CIP 107618 / JCM 11309 / KCTC 3954 / HTE831)</name>
    <dbReference type="NCBI Taxonomy" id="221109"/>
    <lineage>
        <taxon>Bacteria</taxon>
        <taxon>Bacillati</taxon>
        <taxon>Bacillota</taxon>
        <taxon>Bacilli</taxon>
        <taxon>Bacillales</taxon>
        <taxon>Bacillaceae</taxon>
        <taxon>Oceanobacillus</taxon>
    </lineage>
</organism>
<keyword id="KW-0049">Antioxidant</keyword>
<keyword id="KW-1015">Disulfide bond</keyword>
<keyword id="KW-0560">Oxidoreductase</keyword>
<keyword id="KW-0575">Peroxidase</keyword>
<keyword id="KW-0676">Redox-active center</keyword>
<keyword id="KW-1185">Reference proteome</keyword>
<dbReference type="EC" id="1.11.1.24" evidence="1"/>
<dbReference type="EMBL" id="BA000028">
    <property type="protein sequence ID" value="BAC14149.1"/>
    <property type="molecule type" value="Genomic_DNA"/>
</dbReference>
<dbReference type="RefSeq" id="WP_011066587.1">
    <property type="nucleotide sequence ID" value="NC_004193.1"/>
</dbReference>
<dbReference type="SMR" id="Q8EPB7"/>
<dbReference type="STRING" id="221109.gene:10734441"/>
<dbReference type="KEGG" id="oih:OB2193"/>
<dbReference type="eggNOG" id="COG2077">
    <property type="taxonomic scope" value="Bacteria"/>
</dbReference>
<dbReference type="HOGENOM" id="CLU_042529_12_0_9"/>
<dbReference type="OrthoDB" id="9781543at2"/>
<dbReference type="PhylomeDB" id="Q8EPB7"/>
<dbReference type="Proteomes" id="UP000000822">
    <property type="component" value="Chromosome"/>
</dbReference>
<dbReference type="GO" id="GO:0008379">
    <property type="term" value="F:thioredoxin peroxidase activity"/>
    <property type="evidence" value="ECO:0007669"/>
    <property type="project" value="UniProtKB-UniRule"/>
</dbReference>
<dbReference type="CDD" id="cd03014">
    <property type="entry name" value="PRX_Atyp2cys"/>
    <property type="match status" value="1"/>
</dbReference>
<dbReference type="Gene3D" id="3.40.30.10">
    <property type="entry name" value="Glutaredoxin"/>
    <property type="match status" value="1"/>
</dbReference>
<dbReference type="HAMAP" id="MF_00269">
    <property type="entry name" value="Tpx"/>
    <property type="match status" value="1"/>
</dbReference>
<dbReference type="InterPro" id="IPR013740">
    <property type="entry name" value="Redoxin"/>
</dbReference>
<dbReference type="InterPro" id="IPR036249">
    <property type="entry name" value="Thioredoxin-like_sf"/>
</dbReference>
<dbReference type="InterPro" id="IPR013766">
    <property type="entry name" value="Thioredoxin_domain"/>
</dbReference>
<dbReference type="InterPro" id="IPR002065">
    <property type="entry name" value="TPX"/>
</dbReference>
<dbReference type="InterPro" id="IPR018219">
    <property type="entry name" value="Tpx_CS"/>
</dbReference>
<dbReference type="InterPro" id="IPR050455">
    <property type="entry name" value="Tpx_Peroxidase_subfamily"/>
</dbReference>
<dbReference type="NCBIfam" id="NF001808">
    <property type="entry name" value="PRK00522.1"/>
    <property type="match status" value="1"/>
</dbReference>
<dbReference type="PANTHER" id="PTHR43110">
    <property type="entry name" value="THIOL PEROXIDASE"/>
    <property type="match status" value="1"/>
</dbReference>
<dbReference type="PANTHER" id="PTHR43110:SF1">
    <property type="entry name" value="THIOL PEROXIDASE"/>
    <property type="match status" value="1"/>
</dbReference>
<dbReference type="Pfam" id="PF08534">
    <property type="entry name" value="Redoxin"/>
    <property type="match status" value="1"/>
</dbReference>
<dbReference type="SUPFAM" id="SSF52833">
    <property type="entry name" value="Thioredoxin-like"/>
    <property type="match status" value="1"/>
</dbReference>
<dbReference type="PROSITE" id="PS51352">
    <property type="entry name" value="THIOREDOXIN_2"/>
    <property type="match status" value="1"/>
</dbReference>
<dbReference type="PROSITE" id="PS01265">
    <property type="entry name" value="TPX"/>
    <property type="match status" value="1"/>
</dbReference>
<accession>Q8EPB7</accession>
<reference key="1">
    <citation type="journal article" date="2002" name="Nucleic Acids Res.">
        <title>Genome sequence of Oceanobacillus iheyensis isolated from the Iheya Ridge and its unexpected adaptive capabilities to extreme environments.</title>
        <authorList>
            <person name="Takami H."/>
            <person name="Takaki Y."/>
            <person name="Uchiyama I."/>
        </authorList>
    </citation>
    <scope>NUCLEOTIDE SEQUENCE [LARGE SCALE GENOMIC DNA]</scope>
    <source>
        <strain>DSM 14371 / CIP 107618 / JCM 11309 / KCTC 3954 / HTE831</strain>
    </source>
</reference>
<name>TPX_OCEIH</name>
<comment type="function">
    <text evidence="1">Thiol-specific peroxidase that catalyzes the reduction of hydrogen peroxide and organic hydroperoxides to water and alcohols, respectively. Plays a role in cell protection against oxidative stress by detoxifying peroxides.</text>
</comment>
<comment type="catalytic activity">
    <reaction evidence="1">
        <text>a hydroperoxide + [thioredoxin]-dithiol = an alcohol + [thioredoxin]-disulfide + H2O</text>
        <dbReference type="Rhea" id="RHEA:62620"/>
        <dbReference type="Rhea" id="RHEA-COMP:10698"/>
        <dbReference type="Rhea" id="RHEA-COMP:10700"/>
        <dbReference type="ChEBI" id="CHEBI:15377"/>
        <dbReference type="ChEBI" id="CHEBI:29950"/>
        <dbReference type="ChEBI" id="CHEBI:30879"/>
        <dbReference type="ChEBI" id="CHEBI:35924"/>
        <dbReference type="ChEBI" id="CHEBI:50058"/>
        <dbReference type="EC" id="1.11.1.24"/>
    </reaction>
</comment>
<comment type="subunit">
    <text evidence="1">Homodimer.</text>
</comment>
<comment type="miscellaneous">
    <text evidence="1">The active site is a conserved redox-active cysteine residue, the peroxidatic cysteine (C(P)), which makes the nucleophilic attack on the peroxide substrate. The peroxide oxidizes the C(P)-SH to cysteine sulfenic acid (C(P)-SOH), which then reacts with another cysteine residue, the resolving cysteine (C(R)), to form a disulfide bridge. The disulfide is subsequently reduced by an appropriate electron donor to complete the catalytic cycle. In this atypical 2-Cys peroxiredoxin, C(R) is present in the same subunit to form an intramolecular disulfide. The disulfide is subsequently reduced by thioredoxin.</text>
</comment>
<comment type="similarity">
    <text evidence="1">Belongs to the peroxiredoxin family. Tpx subfamily.</text>
</comment>
<evidence type="ECO:0000255" key="1">
    <source>
        <dbReference type="HAMAP-Rule" id="MF_00269"/>
    </source>
</evidence>
<protein>
    <recommendedName>
        <fullName evidence="1">Thiol peroxidase</fullName>
        <shortName evidence="1">Tpx</shortName>
        <ecNumber evidence="1">1.11.1.24</ecNumber>
    </recommendedName>
    <alternativeName>
        <fullName evidence="1">Peroxiredoxin tpx</fullName>
        <shortName evidence="1">Prx</shortName>
    </alternativeName>
    <alternativeName>
        <fullName evidence="1">Thioredoxin peroxidase</fullName>
    </alternativeName>
    <alternativeName>
        <fullName evidence="1">Thioredoxin-dependent peroxiredoxin</fullName>
    </alternativeName>
</protein>
<gene>
    <name evidence="1" type="primary">tpx</name>
    <name type="ordered locus">OB2193</name>
</gene>